<comment type="function">
    <text evidence="1">DNA-binding protein that binds to both single- and double-stranded DNA. Binds preferentially to UV-damaged DNA. May be involved in DNA-metabolic processes.</text>
</comment>
<comment type="similarity">
    <text evidence="4">Belongs to the WD repeat DDB2/WDR76 family.</text>
</comment>
<accession>A7TL17</accession>
<reference key="1">
    <citation type="journal article" date="2007" name="Proc. Natl. Acad. Sci. U.S.A.">
        <title>Independent sorting-out of thousands of duplicated gene pairs in two yeast species descended from a whole-genome duplication.</title>
        <authorList>
            <person name="Scannell D.R."/>
            <person name="Frank A.C."/>
            <person name="Conant G.C."/>
            <person name="Byrne K.P."/>
            <person name="Woolfit M."/>
            <person name="Wolfe K.H."/>
        </authorList>
    </citation>
    <scope>NUCLEOTIDE SEQUENCE [LARGE SCALE GENOMIC DNA]</scope>
    <source>
        <strain>ATCC 22028 / DSM 70294 / BCRC 21397 / CBS 2163 / NBRC 10782 / NRRL Y-8283 / UCD 57-17</strain>
    </source>
</reference>
<keyword id="KW-0227">DNA damage</keyword>
<keyword id="KW-0238">DNA-binding</keyword>
<keyword id="KW-1185">Reference proteome</keyword>
<keyword id="KW-0677">Repeat</keyword>
<keyword id="KW-0853">WD repeat</keyword>
<name>CMR1_VANPO</name>
<feature type="chain" id="PRO_0000351116" description="DNA damage-binding protein CMR1">
    <location>
        <begin position="1"/>
        <end position="536"/>
    </location>
</feature>
<feature type="repeat" description="WD 1" evidence="2">
    <location>
        <begin position="195"/>
        <end position="236"/>
    </location>
</feature>
<feature type="repeat" description="WD 2" evidence="2">
    <location>
        <begin position="251"/>
        <end position="291"/>
    </location>
</feature>
<feature type="repeat" description="WD 3" evidence="2">
    <location>
        <begin position="346"/>
        <end position="386"/>
    </location>
</feature>
<feature type="repeat" description="WD 4" evidence="2">
    <location>
        <begin position="403"/>
        <end position="442"/>
    </location>
</feature>
<feature type="repeat" description="WD 5" evidence="2">
    <location>
        <begin position="456"/>
        <end position="495"/>
    </location>
</feature>
<feature type="repeat" description="WD 6" evidence="2">
    <location>
        <begin position="496"/>
        <end position="535"/>
    </location>
</feature>
<feature type="region of interest" description="Disordered" evidence="3">
    <location>
        <begin position="36"/>
        <end position="72"/>
    </location>
</feature>
<feature type="compositionally biased region" description="Basic and acidic residues" evidence="3">
    <location>
        <begin position="36"/>
        <end position="45"/>
    </location>
</feature>
<proteinExistence type="inferred from homology"/>
<evidence type="ECO:0000250" key="1">
    <source>
        <dbReference type="UniProtKB" id="Q12510"/>
    </source>
</evidence>
<evidence type="ECO:0000255" key="2"/>
<evidence type="ECO:0000256" key="3">
    <source>
        <dbReference type="SAM" id="MobiDB-lite"/>
    </source>
</evidence>
<evidence type="ECO:0000305" key="4"/>
<sequence length="536" mass="60763">MVELTEFQKRRQENIKRNNDLLKKLHLGGAASRIKREAGVDDTHRTVVKKKKSPSVSRGRSASPKVAPVATRRSMRLRGEKVDNVGIPNVSDTQLMKMSLDGTSGSSVNDKELVDEIKDTPVIGDVKLSDLIKDEKEENLIEKFKSFANKNFSSGDFFEEIRKRQMENKAPELQKLQDDFDLQLYDVFQPNEIKLVYERITATYFHPSLDKKLIVAGDTSGNIGLWNVRDEPLSENGEDQMVEPDITKVKFFTKNVGKIDCFTSDTSKLLTASYDGSLRSIDLNSLQSNDILTLRNEYDDPLGISDFQFSYENPNVLLMTTLSGEFVNIDLREKIGEQISSNLRRLSDKKIGSFSINPNRPYEIATGSLDRTLKIWDIRKLVKKPEWSQYEDYDSCEIVSVYDSRLSVSAVSYSPTDNTLVCNGYDDTIRLFDVGSDNLPDDLQPKLTLKHNCQSGRWTSILKARFKQDQDVFAIANMKRAIDIYDSQGQQLAHLPTATVPAVISWHPLRNWIAGGNSSGKIFLFTDETVKKEEEE</sequence>
<dbReference type="EMBL" id="DS480411">
    <property type="protein sequence ID" value="EDO17073.1"/>
    <property type="molecule type" value="Genomic_DNA"/>
</dbReference>
<dbReference type="RefSeq" id="XP_001644931.1">
    <property type="nucleotide sequence ID" value="XM_001644881.1"/>
</dbReference>
<dbReference type="SMR" id="A7TL17"/>
<dbReference type="FunCoup" id="A7TL17">
    <property type="interactions" value="818"/>
</dbReference>
<dbReference type="STRING" id="436907.A7TL17"/>
<dbReference type="GeneID" id="5545265"/>
<dbReference type="KEGG" id="vpo:Kpol_530p43"/>
<dbReference type="eggNOG" id="KOG4328">
    <property type="taxonomic scope" value="Eukaryota"/>
</dbReference>
<dbReference type="HOGENOM" id="CLU_017019_1_1_1"/>
<dbReference type="InParanoid" id="A7TL17"/>
<dbReference type="OMA" id="FSWFELQ"/>
<dbReference type="OrthoDB" id="9890280at2759"/>
<dbReference type="PhylomeDB" id="A7TL17"/>
<dbReference type="Proteomes" id="UP000000267">
    <property type="component" value="Unassembled WGS sequence"/>
</dbReference>
<dbReference type="GO" id="GO:0000785">
    <property type="term" value="C:chromatin"/>
    <property type="evidence" value="ECO:0007669"/>
    <property type="project" value="EnsemblFungi"/>
</dbReference>
<dbReference type="GO" id="GO:0005737">
    <property type="term" value="C:cytoplasm"/>
    <property type="evidence" value="ECO:0007669"/>
    <property type="project" value="EnsemblFungi"/>
</dbReference>
<dbReference type="GO" id="GO:0034399">
    <property type="term" value="C:nuclear periphery"/>
    <property type="evidence" value="ECO:0007669"/>
    <property type="project" value="EnsemblFungi"/>
</dbReference>
<dbReference type="GO" id="GO:0003677">
    <property type="term" value="F:DNA binding"/>
    <property type="evidence" value="ECO:0007669"/>
    <property type="project" value="UniProtKB-KW"/>
</dbReference>
<dbReference type="GO" id="GO:0006974">
    <property type="term" value="P:DNA damage response"/>
    <property type="evidence" value="ECO:0007669"/>
    <property type="project" value="UniProtKB-KW"/>
</dbReference>
<dbReference type="GO" id="GO:2000001">
    <property type="term" value="P:regulation of DNA damage checkpoint"/>
    <property type="evidence" value="ECO:0007669"/>
    <property type="project" value="EnsemblFungi"/>
</dbReference>
<dbReference type="Gene3D" id="2.130.10.10">
    <property type="entry name" value="YVTN repeat-like/Quinoprotein amine dehydrogenase"/>
    <property type="match status" value="1"/>
</dbReference>
<dbReference type="InterPro" id="IPR015943">
    <property type="entry name" value="WD40/YVTN_repeat-like_dom_sf"/>
</dbReference>
<dbReference type="InterPro" id="IPR019775">
    <property type="entry name" value="WD40_repeat_CS"/>
</dbReference>
<dbReference type="InterPro" id="IPR036322">
    <property type="entry name" value="WD40_repeat_dom_sf"/>
</dbReference>
<dbReference type="InterPro" id="IPR001680">
    <property type="entry name" value="WD40_rpt"/>
</dbReference>
<dbReference type="InterPro" id="IPR050853">
    <property type="entry name" value="WD_repeat_DNA-damage-binding"/>
</dbReference>
<dbReference type="PANTHER" id="PTHR14773">
    <property type="entry name" value="WD REPEAT-CONTAINING PROTEIN 76"/>
    <property type="match status" value="1"/>
</dbReference>
<dbReference type="PANTHER" id="PTHR14773:SF0">
    <property type="entry name" value="WD REPEAT-CONTAINING PROTEIN 76"/>
    <property type="match status" value="1"/>
</dbReference>
<dbReference type="Pfam" id="PF00400">
    <property type="entry name" value="WD40"/>
    <property type="match status" value="2"/>
</dbReference>
<dbReference type="SMART" id="SM00320">
    <property type="entry name" value="WD40"/>
    <property type="match status" value="5"/>
</dbReference>
<dbReference type="SUPFAM" id="SSF50978">
    <property type="entry name" value="WD40 repeat-like"/>
    <property type="match status" value="1"/>
</dbReference>
<dbReference type="PROSITE" id="PS00678">
    <property type="entry name" value="WD_REPEATS_1"/>
    <property type="match status" value="1"/>
</dbReference>
<dbReference type="PROSITE" id="PS50082">
    <property type="entry name" value="WD_REPEATS_2"/>
    <property type="match status" value="1"/>
</dbReference>
<dbReference type="PROSITE" id="PS50294">
    <property type="entry name" value="WD_REPEATS_REGION"/>
    <property type="match status" value="1"/>
</dbReference>
<protein>
    <recommendedName>
        <fullName evidence="1">DNA damage-binding protein CMR1</fullName>
    </recommendedName>
</protein>
<organism>
    <name type="scientific">Vanderwaltozyma polyspora (strain ATCC 22028 / DSM 70294 / BCRC 21397 / CBS 2163 / NBRC 10782 / NRRL Y-8283 / UCD 57-17)</name>
    <name type="common">Kluyveromyces polysporus</name>
    <dbReference type="NCBI Taxonomy" id="436907"/>
    <lineage>
        <taxon>Eukaryota</taxon>
        <taxon>Fungi</taxon>
        <taxon>Dikarya</taxon>
        <taxon>Ascomycota</taxon>
        <taxon>Saccharomycotina</taxon>
        <taxon>Saccharomycetes</taxon>
        <taxon>Saccharomycetales</taxon>
        <taxon>Saccharomycetaceae</taxon>
        <taxon>Vanderwaltozyma</taxon>
    </lineage>
</organism>
<gene>
    <name type="ORF">Kpol_530p43</name>
</gene>